<dbReference type="EMBL" id="CP001127">
    <property type="protein sequence ID" value="ACF92184.1"/>
    <property type="molecule type" value="Genomic_DNA"/>
</dbReference>
<dbReference type="RefSeq" id="WP_000896506.1">
    <property type="nucleotide sequence ID" value="NC_011094.1"/>
</dbReference>
<dbReference type="SMR" id="B4TN32"/>
<dbReference type="GeneID" id="66758155"/>
<dbReference type="KEGG" id="sew:SeSA_A4076"/>
<dbReference type="HOGENOM" id="CLU_050669_0_1_6"/>
<dbReference type="Proteomes" id="UP000001865">
    <property type="component" value="Chromosome"/>
</dbReference>
<dbReference type="GO" id="GO:0005886">
    <property type="term" value="C:plasma membrane"/>
    <property type="evidence" value="ECO:0007669"/>
    <property type="project" value="UniProtKB-SubCell"/>
</dbReference>
<dbReference type="GO" id="GO:0045259">
    <property type="term" value="C:proton-transporting ATP synthase complex"/>
    <property type="evidence" value="ECO:0007669"/>
    <property type="project" value="UniProtKB-KW"/>
</dbReference>
<dbReference type="GO" id="GO:0005524">
    <property type="term" value="F:ATP binding"/>
    <property type="evidence" value="ECO:0007669"/>
    <property type="project" value="UniProtKB-UniRule"/>
</dbReference>
<dbReference type="GO" id="GO:0046933">
    <property type="term" value="F:proton-transporting ATP synthase activity, rotational mechanism"/>
    <property type="evidence" value="ECO:0007669"/>
    <property type="project" value="UniProtKB-UniRule"/>
</dbReference>
<dbReference type="GO" id="GO:0042777">
    <property type="term" value="P:proton motive force-driven plasma membrane ATP synthesis"/>
    <property type="evidence" value="ECO:0007669"/>
    <property type="project" value="UniProtKB-UniRule"/>
</dbReference>
<dbReference type="CDD" id="cd12151">
    <property type="entry name" value="F1-ATPase_gamma"/>
    <property type="match status" value="1"/>
</dbReference>
<dbReference type="FunFam" id="1.10.287.80:FF:000005">
    <property type="entry name" value="ATP synthase gamma chain"/>
    <property type="match status" value="2"/>
</dbReference>
<dbReference type="FunFam" id="3.40.1380.10:FF:000001">
    <property type="entry name" value="ATP synthase gamma chain"/>
    <property type="match status" value="1"/>
</dbReference>
<dbReference type="Gene3D" id="3.40.1380.10">
    <property type="match status" value="1"/>
</dbReference>
<dbReference type="Gene3D" id="1.10.287.80">
    <property type="entry name" value="ATP synthase, gamma subunit, helix hairpin domain"/>
    <property type="match status" value="1"/>
</dbReference>
<dbReference type="HAMAP" id="MF_00815">
    <property type="entry name" value="ATP_synth_gamma_bact"/>
    <property type="match status" value="1"/>
</dbReference>
<dbReference type="InterPro" id="IPR035968">
    <property type="entry name" value="ATP_synth_F1_ATPase_gsu"/>
</dbReference>
<dbReference type="InterPro" id="IPR000131">
    <property type="entry name" value="ATP_synth_F1_gsu"/>
</dbReference>
<dbReference type="InterPro" id="IPR023632">
    <property type="entry name" value="ATP_synth_F1_gsu_CS"/>
</dbReference>
<dbReference type="NCBIfam" id="TIGR01146">
    <property type="entry name" value="ATPsyn_F1gamma"/>
    <property type="match status" value="1"/>
</dbReference>
<dbReference type="NCBIfam" id="NF004144">
    <property type="entry name" value="PRK05621.1-1"/>
    <property type="match status" value="1"/>
</dbReference>
<dbReference type="PANTHER" id="PTHR11693">
    <property type="entry name" value="ATP SYNTHASE GAMMA CHAIN"/>
    <property type="match status" value="1"/>
</dbReference>
<dbReference type="PANTHER" id="PTHR11693:SF22">
    <property type="entry name" value="ATP SYNTHASE SUBUNIT GAMMA, MITOCHONDRIAL"/>
    <property type="match status" value="1"/>
</dbReference>
<dbReference type="Pfam" id="PF00231">
    <property type="entry name" value="ATP-synt"/>
    <property type="match status" value="1"/>
</dbReference>
<dbReference type="PRINTS" id="PR00126">
    <property type="entry name" value="ATPASEGAMMA"/>
</dbReference>
<dbReference type="SUPFAM" id="SSF52943">
    <property type="entry name" value="ATP synthase (F1-ATPase), gamma subunit"/>
    <property type="match status" value="1"/>
</dbReference>
<dbReference type="PROSITE" id="PS00153">
    <property type="entry name" value="ATPASE_GAMMA"/>
    <property type="match status" value="1"/>
</dbReference>
<feature type="chain" id="PRO_1000134205" description="ATP synthase gamma chain">
    <location>
        <begin position="1"/>
        <end position="287"/>
    </location>
</feature>
<name>ATPG_SALSV</name>
<gene>
    <name evidence="1" type="primary">atpG</name>
    <name type="ordered locus">SeSA_A4076</name>
</gene>
<organism>
    <name type="scientific">Salmonella schwarzengrund (strain CVM19633)</name>
    <dbReference type="NCBI Taxonomy" id="439843"/>
    <lineage>
        <taxon>Bacteria</taxon>
        <taxon>Pseudomonadati</taxon>
        <taxon>Pseudomonadota</taxon>
        <taxon>Gammaproteobacteria</taxon>
        <taxon>Enterobacterales</taxon>
        <taxon>Enterobacteriaceae</taxon>
        <taxon>Salmonella</taxon>
    </lineage>
</organism>
<reference key="1">
    <citation type="journal article" date="2011" name="J. Bacteriol.">
        <title>Comparative genomics of 28 Salmonella enterica isolates: evidence for CRISPR-mediated adaptive sublineage evolution.</title>
        <authorList>
            <person name="Fricke W.F."/>
            <person name="Mammel M.K."/>
            <person name="McDermott P.F."/>
            <person name="Tartera C."/>
            <person name="White D.G."/>
            <person name="Leclerc J.E."/>
            <person name="Ravel J."/>
            <person name="Cebula T.A."/>
        </authorList>
    </citation>
    <scope>NUCLEOTIDE SEQUENCE [LARGE SCALE GENOMIC DNA]</scope>
    <source>
        <strain>CVM19633</strain>
    </source>
</reference>
<accession>B4TN32</accession>
<comment type="function">
    <text evidence="1">Produces ATP from ADP in the presence of a proton gradient across the membrane. The gamma chain is believed to be important in regulating ATPase activity and the flow of protons through the CF(0) complex.</text>
</comment>
<comment type="subunit">
    <text evidence="1">F-type ATPases have 2 components, CF(1) - the catalytic core - and CF(0) - the membrane proton channel. CF(1) has five subunits: alpha(3), beta(3), gamma(1), delta(1), epsilon(1). CF(0) has three main subunits: a, b and c.</text>
</comment>
<comment type="subcellular location">
    <subcellularLocation>
        <location evidence="1">Cell inner membrane</location>
        <topology evidence="1">Peripheral membrane protein</topology>
    </subcellularLocation>
</comment>
<comment type="similarity">
    <text evidence="1">Belongs to the ATPase gamma chain family.</text>
</comment>
<evidence type="ECO:0000255" key="1">
    <source>
        <dbReference type="HAMAP-Rule" id="MF_00815"/>
    </source>
</evidence>
<sequence length="287" mass="31555">MAGAKEIRSKIASVQNTQKITKAMEMVAASKMRKSQDRMAASRPYAETMRKVIGHLANGNLEYKHPYLEERDVKRVGYLVVSTDRGLCGGLNINLFKKLLADMKAWSDKGVQCELAMIGSKGVSFFNSVGGNVVAQVTGMGDNPSLSELIGPVKVMLQAYDEGRLDKLYIVSNKFINTMSQVPTITQLLPLPASEDDDLKRKAWDYLYEPDPKALLDTLLRRYVESQVYQGVVENLASEQAARMVAMKAATDNGGSLIKELQLVYNKARQASITQELTEIVSGAAAV</sequence>
<keyword id="KW-0066">ATP synthesis</keyword>
<keyword id="KW-0997">Cell inner membrane</keyword>
<keyword id="KW-1003">Cell membrane</keyword>
<keyword id="KW-0139">CF(1)</keyword>
<keyword id="KW-0375">Hydrogen ion transport</keyword>
<keyword id="KW-0406">Ion transport</keyword>
<keyword id="KW-0472">Membrane</keyword>
<keyword id="KW-0813">Transport</keyword>
<protein>
    <recommendedName>
        <fullName evidence="1">ATP synthase gamma chain</fullName>
    </recommendedName>
    <alternativeName>
        <fullName evidence="1">ATP synthase F1 sector gamma subunit</fullName>
    </alternativeName>
    <alternativeName>
        <fullName evidence="1">F-ATPase gamma subunit</fullName>
    </alternativeName>
</protein>
<proteinExistence type="inferred from homology"/>